<gene>
    <name type="primary">OR52N1</name>
</gene>
<protein>
    <recommendedName>
        <fullName>Olfactory receptor 52N1</fullName>
    </recommendedName>
    <alternativeName>
        <fullName>Olfactory receptor OR11-61</fullName>
    </alternativeName>
</protein>
<keyword id="KW-1003">Cell membrane</keyword>
<keyword id="KW-1015">Disulfide bond</keyword>
<keyword id="KW-0297">G-protein coupled receptor</keyword>
<keyword id="KW-0325">Glycoprotein</keyword>
<keyword id="KW-0472">Membrane</keyword>
<keyword id="KW-0552">Olfaction</keyword>
<keyword id="KW-0675">Receptor</keyword>
<keyword id="KW-1185">Reference proteome</keyword>
<keyword id="KW-0716">Sensory transduction</keyword>
<keyword id="KW-0807">Transducer</keyword>
<keyword id="KW-0812">Transmembrane</keyword>
<keyword id="KW-1133">Transmembrane helix</keyword>
<accession>Q8NH53</accession>
<accession>Q6IFF6</accession>
<proteinExistence type="inferred from homology"/>
<organism>
    <name type="scientific">Homo sapiens</name>
    <name type="common">Human</name>
    <dbReference type="NCBI Taxonomy" id="9606"/>
    <lineage>
        <taxon>Eukaryota</taxon>
        <taxon>Metazoa</taxon>
        <taxon>Chordata</taxon>
        <taxon>Craniata</taxon>
        <taxon>Vertebrata</taxon>
        <taxon>Euteleostomi</taxon>
        <taxon>Mammalia</taxon>
        <taxon>Eutheria</taxon>
        <taxon>Euarchontoglires</taxon>
        <taxon>Primates</taxon>
        <taxon>Haplorrhini</taxon>
        <taxon>Catarrhini</taxon>
        <taxon>Hominidae</taxon>
        <taxon>Homo</taxon>
    </lineage>
</organism>
<dbReference type="EMBL" id="AB065538">
    <property type="protein sequence ID" value="BAC05784.1"/>
    <property type="molecule type" value="Genomic_DNA"/>
</dbReference>
<dbReference type="EMBL" id="BK004306">
    <property type="protein sequence ID" value="DAA04704.1"/>
    <property type="molecule type" value="Genomic_DNA"/>
</dbReference>
<dbReference type="CCDS" id="CCDS31398.1"/>
<dbReference type="RefSeq" id="NP_001001913.1">
    <property type="nucleotide sequence ID" value="NM_001001913.2"/>
</dbReference>
<dbReference type="SMR" id="Q8NH53"/>
<dbReference type="BioGRID" id="122676">
    <property type="interactions" value="1"/>
</dbReference>
<dbReference type="FunCoup" id="Q8NH53">
    <property type="interactions" value="466"/>
</dbReference>
<dbReference type="STRING" id="9606.ENSP00000493272"/>
<dbReference type="GlyCosmos" id="Q8NH53">
    <property type="glycosylation" value="1 site, No reported glycans"/>
</dbReference>
<dbReference type="GlyGen" id="Q8NH53">
    <property type="glycosylation" value="1 site"/>
</dbReference>
<dbReference type="iPTMnet" id="Q8NH53"/>
<dbReference type="PhosphoSitePlus" id="Q8NH53"/>
<dbReference type="BioMuta" id="OR52N1"/>
<dbReference type="DMDM" id="38372811"/>
<dbReference type="MassIVE" id="Q8NH53"/>
<dbReference type="PaxDb" id="9606-ENSP00000322823"/>
<dbReference type="Antibodypedia" id="57908">
    <property type="antibodies" value="58 antibodies from 18 providers"/>
</dbReference>
<dbReference type="DNASU" id="79473"/>
<dbReference type="Ensembl" id="ENST00000641645.1">
    <property type="protein sequence ID" value="ENSP00000493272.1"/>
    <property type="gene ID" value="ENSG00000181001.3"/>
</dbReference>
<dbReference type="GeneID" id="79473"/>
<dbReference type="KEGG" id="hsa:79473"/>
<dbReference type="MANE-Select" id="ENST00000641645.1">
    <property type="protein sequence ID" value="ENSP00000493272.1"/>
    <property type="RefSeq nucleotide sequence ID" value="NM_001001913.2"/>
    <property type="RefSeq protein sequence ID" value="NP_001001913.1"/>
</dbReference>
<dbReference type="UCSC" id="uc010qzo.2">
    <property type="organism name" value="human"/>
</dbReference>
<dbReference type="AGR" id="HGNC:14853"/>
<dbReference type="CTD" id="79473"/>
<dbReference type="GeneCards" id="OR52N1"/>
<dbReference type="HGNC" id="HGNC:14853">
    <property type="gene designation" value="OR52N1"/>
</dbReference>
<dbReference type="HPA" id="ENSG00000181001">
    <property type="expression patterns" value="Not detected"/>
</dbReference>
<dbReference type="neXtProt" id="NX_Q8NH53"/>
<dbReference type="OpenTargets" id="ENSG00000181001"/>
<dbReference type="PharmGKB" id="PA32425"/>
<dbReference type="VEuPathDB" id="HostDB:ENSG00000181001"/>
<dbReference type="eggNOG" id="ENOG502QV28">
    <property type="taxonomic scope" value="Eukaryota"/>
</dbReference>
<dbReference type="GeneTree" id="ENSGT01130000278278"/>
<dbReference type="HOGENOM" id="CLU_012526_0_0_1"/>
<dbReference type="InParanoid" id="Q8NH53"/>
<dbReference type="OMA" id="MESGMLM"/>
<dbReference type="OrthoDB" id="5969463at2759"/>
<dbReference type="PAN-GO" id="Q8NH53">
    <property type="GO annotations" value="0 GO annotations based on evolutionary models"/>
</dbReference>
<dbReference type="PhylomeDB" id="Q8NH53"/>
<dbReference type="TreeFam" id="TF343679"/>
<dbReference type="PathwayCommons" id="Q8NH53"/>
<dbReference type="Reactome" id="R-HSA-9752946">
    <property type="pathway name" value="Expression and translocation of olfactory receptors"/>
</dbReference>
<dbReference type="BioGRID-ORCS" id="79473">
    <property type="hits" value="8 hits in 712 CRISPR screens"/>
</dbReference>
<dbReference type="GeneWiki" id="OR52N1"/>
<dbReference type="GenomeRNAi" id="79473"/>
<dbReference type="Pharos" id="Q8NH53">
    <property type="development level" value="Tdark"/>
</dbReference>
<dbReference type="PRO" id="PR:Q8NH53"/>
<dbReference type="Proteomes" id="UP000005640">
    <property type="component" value="Chromosome 11"/>
</dbReference>
<dbReference type="RNAct" id="Q8NH53">
    <property type="molecule type" value="protein"/>
</dbReference>
<dbReference type="Bgee" id="ENSG00000181001">
    <property type="expression patterns" value="Expressed in male germ line stem cell (sensu Vertebrata) in testis and 18 other cell types or tissues"/>
</dbReference>
<dbReference type="GO" id="GO:0005886">
    <property type="term" value="C:plasma membrane"/>
    <property type="evidence" value="ECO:0000318"/>
    <property type="project" value="GO_Central"/>
</dbReference>
<dbReference type="GO" id="GO:0004930">
    <property type="term" value="F:G protein-coupled receptor activity"/>
    <property type="evidence" value="ECO:0007669"/>
    <property type="project" value="UniProtKB-KW"/>
</dbReference>
<dbReference type="GO" id="GO:0004984">
    <property type="term" value="F:olfactory receptor activity"/>
    <property type="evidence" value="ECO:0000318"/>
    <property type="project" value="GO_Central"/>
</dbReference>
<dbReference type="FunFam" id="1.20.1070.10:FF:000006">
    <property type="entry name" value="Olfactory receptor"/>
    <property type="match status" value="1"/>
</dbReference>
<dbReference type="Gene3D" id="1.20.1070.10">
    <property type="entry name" value="Rhodopsin 7-helix transmembrane proteins"/>
    <property type="match status" value="1"/>
</dbReference>
<dbReference type="InterPro" id="IPR017452">
    <property type="entry name" value="GPCR_Rhodpsn_7TM"/>
</dbReference>
<dbReference type="InterPro" id="IPR000725">
    <property type="entry name" value="Olfact_rcpt"/>
</dbReference>
<dbReference type="InterPro" id="IPR050402">
    <property type="entry name" value="OR51/52/56-like"/>
</dbReference>
<dbReference type="PANTHER" id="PTHR26450:SF145">
    <property type="entry name" value="OLFACTORY RECEPTOR 52N1"/>
    <property type="match status" value="1"/>
</dbReference>
<dbReference type="PANTHER" id="PTHR26450">
    <property type="entry name" value="OLFACTORY RECEPTOR 56B1-RELATED"/>
    <property type="match status" value="1"/>
</dbReference>
<dbReference type="Pfam" id="PF13853">
    <property type="entry name" value="7tm_4"/>
    <property type="match status" value="1"/>
</dbReference>
<dbReference type="PRINTS" id="PR00245">
    <property type="entry name" value="OLFACTORYR"/>
</dbReference>
<dbReference type="SUPFAM" id="SSF81321">
    <property type="entry name" value="Family A G protein-coupled receptor-like"/>
    <property type="match status" value="1"/>
</dbReference>
<dbReference type="PROSITE" id="PS50262">
    <property type="entry name" value="G_PROTEIN_RECEP_F1_2"/>
    <property type="match status" value="1"/>
</dbReference>
<feature type="chain" id="PRO_0000150786" description="Olfactory receptor 52N1">
    <location>
        <begin position="1"/>
        <end position="320"/>
    </location>
</feature>
<feature type="topological domain" description="Extracellular" evidence="1">
    <location>
        <begin position="1"/>
        <end position="27"/>
    </location>
</feature>
<feature type="transmembrane region" description="Helical; Name=1" evidence="1">
    <location>
        <begin position="28"/>
        <end position="48"/>
    </location>
</feature>
<feature type="topological domain" description="Cytoplasmic" evidence="1">
    <location>
        <begin position="49"/>
        <end position="56"/>
    </location>
</feature>
<feature type="transmembrane region" description="Helical; Name=2" evidence="1">
    <location>
        <begin position="57"/>
        <end position="77"/>
    </location>
</feature>
<feature type="topological domain" description="Extracellular" evidence="1">
    <location>
        <begin position="78"/>
        <end position="101"/>
    </location>
</feature>
<feature type="transmembrane region" description="Helical; Name=3" evidence="1">
    <location>
        <begin position="102"/>
        <end position="122"/>
    </location>
</feature>
<feature type="topological domain" description="Cytoplasmic" evidence="1">
    <location>
        <begin position="123"/>
        <end position="141"/>
    </location>
</feature>
<feature type="transmembrane region" description="Helical; Name=4" evidence="1">
    <location>
        <begin position="142"/>
        <end position="162"/>
    </location>
</feature>
<feature type="topological domain" description="Extracellular" evidence="1">
    <location>
        <begin position="163"/>
        <end position="198"/>
    </location>
</feature>
<feature type="transmembrane region" description="Helical; Name=5" evidence="1">
    <location>
        <begin position="199"/>
        <end position="219"/>
    </location>
</feature>
<feature type="topological domain" description="Cytoplasmic" evidence="1">
    <location>
        <begin position="220"/>
        <end position="239"/>
    </location>
</feature>
<feature type="transmembrane region" description="Helical; Name=6" evidence="1">
    <location>
        <begin position="240"/>
        <end position="260"/>
    </location>
</feature>
<feature type="topological domain" description="Extracellular" evidence="1">
    <location>
        <begin position="261"/>
        <end position="276"/>
    </location>
</feature>
<feature type="transmembrane region" description="Helical; Name=7" evidence="1">
    <location>
        <begin position="277"/>
        <end position="297"/>
    </location>
</feature>
<feature type="topological domain" description="Cytoplasmic" evidence="1">
    <location>
        <begin position="298"/>
        <end position="320"/>
    </location>
</feature>
<feature type="glycosylation site" description="N-linked (GlcNAc...) asparagine" evidence="1">
    <location>
        <position position="5"/>
    </location>
</feature>
<feature type="disulfide bond" evidence="2">
    <location>
        <begin position="99"/>
        <end position="191"/>
    </location>
</feature>
<feature type="sequence variant" id="VAR_053335" description="In dbSNP:rs12365487.">
    <original>T</original>
    <variation>N</variation>
    <location>
        <position position="79"/>
    </location>
</feature>
<feature type="sequence variant" id="VAR_053336" description="In dbSNP:rs10742787.">
    <original>A</original>
    <variation>T</variation>
    <location>
        <position position="101"/>
    </location>
</feature>
<feature type="sequence variant" id="VAR_053337" description="In dbSNP:rs10769224.">
    <original>C</original>
    <variation>Y</variation>
    <location>
        <position position="125"/>
    </location>
</feature>
<feature type="sequence variant" id="VAR_024149" description="In dbSNP:rs7948009.">
    <original>R</original>
    <variation>C</variation>
    <location>
        <position position="167"/>
    </location>
</feature>
<feature type="sequence variant" id="VAR_034351" description="In dbSNP:rs7934670.">
    <original>F</original>
    <variation>I</variation>
    <location>
        <position position="247"/>
    </location>
</feature>
<reference key="1">
    <citation type="submission" date="2001-07" db="EMBL/GenBank/DDBJ databases">
        <title>Genome-wide discovery and analysis of human seven transmembrane helix receptor genes.</title>
        <authorList>
            <person name="Suwa M."/>
            <person name="Sato T."/>
            <person name="Okouchi I."/>
            <person name="Arita M."/>
            <person name="Futami K."/>
            <person name="Matsumoto S."/>
            <person name="Tsutsumi S."/>
            <person name="Aburatani H."/>
            <person name="Asai K."/>
            <person name="Akiyama Y."/>
        </authorList>
    </citation>
    <scope>NUCLEOTIDE SEQUENCE [GENOMIC DNA]</scope>
</reference>
<reference key="2">
    <citation type="journal article" date="2004" name="Proc. Natl. Acad. Sci. U.S.A.">
        <title>The human olfactory receptor gene family.</title>
        <authorList>
            <person name="Malnic B."/>
            <person name="Godfrey P.A."/>
            <person name="Buck L.B."/>
        </authorList>
    </citation>
    <scope>IDENTIFICATION</scope>
</reference>
<reference key="3">
    <citation type="journal article" date="2004" name="Proc. Natl. Acad. Sci. U.S.A.">
        <authorList>
            <person name="Malnic B."/>
            <person name="Godfrey P.A."/>
            <person name="Buck L.B."/>
        </authorList>
    </citation>
    <scope>ERRATUM OF PUBMED:14983052</scope>
</reference>
<comment type="function">
    <text evidence="3">Odorant receptor.</text>
</comment>
<comment type="subcellular location">
    <subcellularLocation>
        <location>Cell membrane</location>
        <topology>Multi-pass membrane protein</topology>
    </subcellularLocation>
</comment>
<comment type="similarity">
    <text evidence="2">Belongs to the G-protein coupled receptor 1 family.</text>
</comment>
<comment type="online information" name="Human Olfactory Receptor Data Exploratorium (HORDE)">
    <link uri="http://genome.weizmann.ac.il/horde/card/index/symbol:OR52N1"/>
</comment>
<name>O52N1_HUMAN</name>
<sequence>MSFLNGTSLTPASFILNGIPGLEDVHLWISFPLCTMYSIAITGNFGLMYLIYCDEALHRPMYVFLALLSFTDVLMCTSTLPNTLFILWFNLKEIDFKACLAQMFFVHTFTGMESGVLMLMALDHCVAICFPLRYATILTNSVIAKAGFLTFLRGVMLVIPSTFLTKRLPYCKGNVIPHTYCDHMSVAKISCGNVRVNAIYGLIVALLIGGFDILCITISYTMILQAVVSLSSADARQKAFSTCTAHFCAIVLTYVPAFFTFFTHHFGGHTIPLHIHIIMANLYLLMPPTMNPIVYGVKTRQVRESVIRFFLKGKDNSHNF</sequence>
<evidence type="ECO:0000255" key="1"/>
<evidence type="ECO:0000255" key="2">
    <source>
        <dbReference type="PROSITE-ProRule" id="PRU00521"/>
    </source>
</evidence>
<evidence type="ECO:0000305" key="3"/>